<feature type="chain" id="PRO_0000290351" description="DNA-directed RNA polymerase II subunit RPB3">
    <location>
        <begin position="1"/>
        <end position="275"/>
    </location>
</feature>
<feature type="region of interest" description="Disordered" evidence="2">
    <location>
        <begin position="203"/>
        <end position="226"/>
    </location>
</feature>
<feature type="binding site" evidence="4 7">
    <location>
        <position position="88"/>
    </location>
    <ligand>
        <name>Zn(2+)</name>
        <dbReference type="ChEBI" id="CHEBI:29105"/>
    </ligand>
</feature>
<feature type="binding site" evidence="4 7">
    <location>
        <position position="90"/>
    </location>
    <ligand>
        <name>Zn(2+)</name>
        <dbReference type="ChEBI" id="CHEBI:29105"/>
    </ligand>
</feature>
<feature type="binding site" evidence="4 7">
    <location>
        <position position="94"/>
    </location>
    <ligand>
        <name>Zn(2+)</name>
        <dbReference type="ChEBI" id="CHEBI:29105"/>
    </ligand>
</feature>
<feature type="binding site" evidence="4 7">
    <location>
        <position position="97"/>
    </location>
    <ligand>
        <name>Zn(2+)</name>
        <dbReference type="ChEBI" id="CHEBI:29105"/>
    </ligand>
</feature>
<feature type="modified residue" description="Phosphoserine" evidence="1">
    <location>
        <position position="124"/>
    </location>
</feature>
<feature type="modified residue" description="Phosphoserine" evidence="1">
    <location>
        <position position="257"/>
    </location>
</feature>
<feature type="strand" evidence="8">
    <location>
        <begin position="8"/>
        <end position="14"/>
    </location>
</feature>
<feature type="strand" evidence="8">
    <location>
        <begin position="16"/>
        <end position="25"/>
    </location>
</feature>
<feature type="helix" evidence="8">
    <location>
        <begin position="28"/>
        <end position="37"/>
    </location>
</feature>
<feature type="turn" evidence="8">
    <location>
        <begin position="38"/>
        <end position="41"/>
    </location>
</feature>
<feature type="strand" evidence="8">
    <location>
        <begin position="44"/>
        <end position="55"/>
    </location>
</feature>
<feature type="strand" evidence="8">
    <location>
        <begin position="57"/>
        <end position="59"/>
    </location>
</feature>
<feature type="helix" evidence="8">
    <location>
        <begin position="61"/>
        <end position="69"/>
    </location>
</feature>
<feature type="turn" evidence="8">
    <location>
        <begin position="76"/>
        <end position="81"/>
    </location>
</feature>
<feature type="turn" evidence="8">
    <location>
        <begin position="85"/>
        <end position="87"/>
    </location>
</feature>
<feature type="strand" evidence="8">
    <location>
        <begin position="89"/>
        <end position="92"/>
    </location>
</feature>
<feature type="turn" evidence="8">
    <location>
        <begin position="95"/>
        <end position="97"/>
    </location>
</feature>
<feature type="strand" evidence="8">
    <location>
        <begin position="99"/>
        <end position="106"/>
    </location>
</feature>
<feature type="strand" evidence="8">
    <location>
        <begin position="109"/>
        <end position="111"/>
    </location>
</feature>
<feature type="strand" evidence="8">
    <location>
        <begin position="113"/>
        <end position="116"/>
    </location>
</feature>
<feature type="helix" evidence="8">
    <location>
        <begin position="117"/>
        <end position="119"/>
    </location>
</feature>
<feature type="strand" evidence="8">
    <location>
        <begin position="121"/>
        <end position="124"/>
    </location>
</feature>
<feature type="strand" evidence="8">
    <location>
        <begin position="149"/>
        <end position="153"/>
    </location>
</feature>
<feature type="strand" evidence="8">
    <location>
        <begin position="158"/>
        <end position="168"/>
    </location>
</feature>
<feature type="turn" evidence="8">
    <location>
        <begin position="170"/>
        <end position="172"/>
    </location>
</feature>
<feature type="helix" evidence="8">
    <location>
        <begin position="174"/>
        <end position="176"/>
    </location>
</feature>
<feature type="strand" evidence="8">
    <location>
        <begin position="183"/>
        <end position="185"/>
    </location>
</feature>
<feature type="helix" evidence="8">
    <location>
        <begin position="200"/>
        <end position="202"/>
    </location>
</feature>
<feature type="strand" evidence="8">
    <location>
        <begin position="229"/>
        <end position="235"/>
    </location>
</feature>
<feature type="strand" evidence="8">
    <location>
        <begin position="237"/>
        <end position="239"/>
    </location>
</feature>
<feature type="helix" evidence="8">
    <location>
        <begin position="241"/>
        <end position="270"/>
    </location>
</feature>
<name>RPB3_BOVIN</name>
<sequence length="275" mass="31429">MPYANQPTVRITELTDENVKFIIENTDLAVANSIRRVFIAEVPIIAIDWVQIDANSSVLHDEFIAHRLGLIPLTSDDIVDKLQYSRDCTCEEFCPECSVEFTLDVRCNEDQTRHVTSRDLISNSPRVIPVTSRNRDNDPNDYVEQDDILIVKLRKGQELRLRAYAKKGFGKEHAKWNPTAGVAFEYDPDNALRHTVYPKPEEWPKSEYSELDEDESQAPYDPNGKPERFYYNVESCGSLRPETIVLSALSGLKKKLSDLQTQLSHEIQSDVLTIN</sequence>
<keyword id="KW-0002">3D-structure</keyword>
<keyword id="KW-0240">DNA-directed RNA polymerase</keyword>
<keyword id="KW-0539">Nucleus</keyword>
<keyword id="KW-0597">Phosphoprotein</keyword>
<keyword id="KW-1185">Reference proteome</keyword>
<keyword id="KW-0804">Transcription</keyword>
<organism>
    <name type="scientific">Bos taurus</name>
    <name type="common">Bovine</name>
    <dbReference type="NCBI Taxonomy" id="9913"/>
    <lineage>
        <taxon>Eukaryota</taxon>
        <taxon>Metazoa</taxon>
        <taxon>Chordata</taxon>
        <taxon>Craniata</taxon>
        <taxon>Vertebrata</taxon>
        <taxon>Euteleostomi</taxon>
        <taxon>Mammalia</taxon>
        <taxon>Eutheria</taxon>
        <taxon>Laurasiatheria</taxon>
        <taxon>Artiodactyla</taxon>
        <taxon>Ruminantia</taxon>
        <taxon>Pecora</taxon>
        <taxon>Bovidae</taxon>
        <taxon>Bovinae</taxon>
        <taxon>Bos</taxon>
    </lineage>
</organism>
<dbReference type="EMBL" id="BT030680">
    <property type="protein sequence ID" value="ABS44996.1"/>
    <property type="molecule type" value="mRNA"/>
</dbReference>
<dbReference type="EMBL" id="BC102301">
    <property type="protein sequence ID" value="AAI02302.1"/>
    <property type="molecule type" value="mRNA"/>
</dbReference>
<dbReference type="RefSeq" id="NP_001029384.1">
    <property type="nucleotide sequence ID" value="NM_001034212.2"/>
</dbReference>
<dbReference type="PDB" id="5FLM">
    <property type="method" value="EM"/>
    <property type="resolution" value="3.40 A"/>
    <property type="chains" value="C=1-275"/>
</dbReference>
<dbReference type="PDB" id="5OIK">
    <property type="method" value="EM"/>
    <property type="resolution" value="3.70 A"/>
    <property type="chains" value="C=1-275"/>
</dbReference>
<dbReference type="PDBsum" id="5FLM"/>
<dbReference type="PDBsum" id="5OIK"/>
<dbReference type="EMDB" id="EMD-3817"/>
<dbReference type="SMR" id="Q3T0Q3"/>
<dbReference type="DIP" id="DIP-61186N"/>
<dbReference type="FunCoup" id="Q3T0Q3">
    <property type="interactions" value="4017"/>
</dbReference>
<dbReference type="IntAct" id="Q3T0Q3">
    <property type="interactions" value="3"/>
</dbReference>
<dbReference type="STRING" id="9913.ENSBTAP00000002420"/>
<dbReference type="PaxDb" id="9913-ENSBTAP00000002420"/>
<dbReference type="Ensembl" id="ENSBTAT00000002420.6">
    <property type="protein sequence ID" value="ENSBTAP00000002420.4"/>
    <property type="gene ID" value="ENSBTAG00000001856.6"/>
</dbReference>
<dbReference type="GeneID" id="504452"/>
<dbReference type="KEGG" id="bta:504452"/>
<dbReference type="CTD" id="5432"/>
<dbReference type="VEuPathDB" id="HostDB:ENSBTAG00000001856"/>
<dbReference type="VGNC" id="VGNC:33137">
    <property type="gene designation" value="POLR2C"/>
</dbReference>
<dbReference type="eggNOG" id="KOG1522">
    <property type="taxonomic scope" value="Eukaryota"/>
</dbReference>
<dbReference type="GeneTree" id="ENSGT00950000183100"/>
<dbReference type="HOGENOM" id="CLU_038421_1_0_1"/>
<dbReference type="InParanoid" id="Q3T0Q3"/>
<dbReference type="OMA" id="FYFEVES"/>
<dbReference type="OrthoDB" id="270173at2759"/>
<dbReference type="TreeFam" id="TF103038"/>
<dbReference type="Reactome" id="R-BTA-112382">
    <property type="pathway name" value="Formation of RNA Pol II elongation complex"/>
</dbReference>
<dbReference type="Reactome" id="R-BTA-113418">
    <property type="pathway name" value="Formation of the Early Elongation Complex"/>
</dbReference>
<dbReference type="Reactome" id="R-BTA-5578749">
    <property type="pathway name" value="Transcriptional regulation by small RNAs"/>
</dbReference>
<dbReference type="Reactome" id="R-BTA-674695">
    <property type="pathway name" value="RNA Polymerase II Pre-transcription Events"/>
</dbReference>
<dbReference type="Reactome" id="R-BTA-6781823">
    <property type="pathway name" value="Formation of TC-NER Pre-Incision Complex"/>
</dbReference>
<dbReference type="Reactome" id="R-BTA-6782135">
    <property type="pathway name" value="Dual incision in TC-NER"/>
</dbReference>
<dbReference type="Reactome" id="R-BTA-6782210">
    <property type="pathway name" value="Gap-filling DNA repair synthesis and ligation in TC-NER"/>
</dbReference>
<dbReference type="Reactome" id="R-BTA-6796648">
    <property type="pathway name" value="TP53 Regulates Transcription of DNA Repair Genes"/>
</dbReference>
<dbReference type="Reactome" id="R-BTA-6803529">
    <property type="pathway name" value="FGFR2 alternative splicing"/>
</dbReference>
<dbReference type="Reactome" id="R-BTA-6807505">
    <property type="pathway name" value="RNA polymerase II transcribes snRNA genes"/>
</dbReference>
<dbReference type="Reactome" id="R-BTA-72086">
    <property type="pathway name" value="mRNA Capping"/>
</dbReference>
<dbReference type="Reactome" id="R-BTA-72163">
    <property type="pathway name" value="mRNA Splicing - Major Pathway"/>
</dbReference>
<dbReference type="Reactome" id="R-BTA-72165">
    <property type="pathway name" value="mRNA Splicing - Minor Pathway"/>
</dbReference>
<dbReference type="Reactome" id="R-BTA-72203">
    <property type="pathway name" value="Processing of Capped Intron-Containing Pre-mRNA"/>
</dbReference>
<dbReference type="Reactome" id="R-BTA-73776">
    <property type="pathway name" value="RNA Polymerase II Promoter Escape"/>
</dbReference>
<dbReference type="Reactome" id="R-BTA-73779">
    <property type="pathway name" value="RNA Polymerase II Transcription Pre-Initiation And Promoter Opening"/>
</dbReference>
<dbReference type="Reactome" id="R-BTA-75953">
    <property type="pathway name" value="RNA Polymerase II Transcription Initiation"/>
</dbReference>
<dbReference type="Reactome" id="R-BTA-75955">
    <property type="pathway name" value="RNA Polymerase II Transcription Elongation"/>
</dbReference>
<dbReference type="Reactome" id="R-BTA-76042">
    <property type="pathway name" value="RNA Polymerase II Transcription Initiation And Promoter Clearance"/>
</dbReference>
<dbReference type="Reactome" id="R-BTA-77075">
    <property type="pathway name" value="RNA Pol II CTD phosphorylation and interaction with CE"/>
</dbReference>
<dbReference type="Reactome" id="R-BTA-9018519">
    <property type="pathway name" value="Estrogen-dependent gene expression"/>
</dbReference>
<dbReference type="EvolutionaryTrace" id="Q3T0Q3"/>
<dbReference type="Proteomes" id="UP000009136">
    <property type="component" value="Chromosome 18"/>
</dbReference>
<dbReference type="Bgee" id="ENSBTAG00000001856">
    <property type="expression patterns" value="Expressed in adenohypophysis and 104 other cell types or tissues"/>
</dbReference>
<dbReference type="GO" id="GO:0005829">
    <property type="term" value="C:cytosol"/>
    <property type="evidence" value="ECO:0007669"/>
    <property type="project" value="Ensembl"/>
</dbReference>
<dbReference type="GO" id="GO:0005634">
    <property type="term" value="C:nucleus"/>
    <property type="evidence" value="ECO:0000250"/>
    <property type="project" value="UniProtKB"/>
</dbReference>
<dbReference type="GO" id="GO:0005665">
    <property type="term" value="C:RNA polymerase II, core complex"/>
    <property type="evidence" value="ECO:0000314"/>
    <property type="project" value="UniProtKB"/>
</dbReference>
<dbReference type="GO" id="GO:0003677">
    <property type="term" value="F:DNA binding"/>
    <property type="evidence" value="ECO:0007669"/>
    <property type="project" value="InterPro"/>
</dbReference>
<dbReference type="GO" id="GO:0003899">
    <property type="term" value="F:DNA-directed RNA polymerase activity"/>
    <property type="evidence" value="ECO:0007669"/>
    <property type="project" value="InterPro"/>
</dbReference>
<dbReference type="GO" id="GO:0046983">
    <property type="term" value="F:protein dimerization activity"/>
    <property type="evidence" value="ECO:0007669"/>
    <property type="project" value="InterPro"/>
</dbReference>
<dbReference type="GO" id="GO:0008270">
    <property type="term" value="F:zinc ion binding"/>
    <property type="evidence" value="ECO:0000314"/>
    <property type="project" value="UniProtKB"/>
</dbReference>
<dbReference type="GO" id="GO:0006366">
    <property type="term" value="P:transcription by RNA polymerase II"/>
    <property type="evidence" value="ECO:0000250"/>
    <property type="project" value="UniProtKB"/>
</dbReference>
<dbReference type="CDD" id="cd07031">
    <property type="entry name" value="RNAP_II_RPB3"/>
    <property type="match status" value="1"/>
</dbReference>
<dbReference type="FunFam" id="2.170.120.12:FF:000002">
    <property type="entry name" value="DNA-directed RNA polymerase II subunit RPB3"/>
    <property type="match status" value="1"/>
</dbReference>
<dbReference type="FunFam" id="3.30.1360.10:FF:000024">
    <property type="entry name" value="DNA-directed RNA polymerase II subunit RPB3"/>
    <property type="match status" value="1"/>
</dbReference>
<dbReference type="Gene3D" id="2.170.120.12">
    <property type="entry name" value="DNA-directed RNA polymerase, insert domain"/>
    <property type="match status" value="1"/>
</dbReference>
<dbReference type="Gene3D" id="3.30.1360.10">
    <property type="entry name" value="RNA polymerase, RBP11-like subunit"/>
    <property type="match status" value="1"/>
</dbReference>
<dbReference type="HAMAP" id="MF_00320">
    <property type="entry name" value="RNApol_arch_Rpo3"/>
    <property type="match status" value="1"/>
</dbReference>
<dbReference type="InterPro" id="IPR001514">
    <property type="entry name" value="DNA-dir_RNA_pol_30-40kDasu_CS"/>
</dbReference>
<dbReference type="InterPro" id="IPR011262">
    <property type="entry name" value="DNA-dir_RNA_pol_insert"/>
</dbReference>
<dbReference type="InterPro" id="IPR011263">
    <property type="entry name" value="DNA-dir_RNA_pol_RpoA/D/Rpb3"/>
</dbReference>
<dbReference type="InterPro" id="IPR036603">
    <property type="entry name" value="RBP11-like"/>
</dbReference>
<dbReference type="InterPro" id="IPR022842">
    <property type="entry name" value="RNAP_Rpo3/Rpb3/RPAC1"/>
</dbReference>
<dbReference type="InterPro" id="IPR036643">
    <property type="entry name" value="RNApol_insert_sf"/>
</dbReference>
<dbReference type="InterPro" id="IPR050518">
    <property type="entry name" value="Rpo3/RPB3_RNA_Pol_subunit"/>
</dbReference>
<dbReference type="NCBIfam" id="NF001988">
    <property type="entry name" value="PRK00783.1"/>
    <property type="match status" value="1"/>
</dbReference>
<dbReference type="PANTHER" id="PTHR11800">
    <property type="entry name" value="DNA-DIRECTED RNA POLYMERASE"/>
    <property type="match status" value="1"/>
</dbReference>
<dbReference type="PANTHER" id="PTHR11800:SF2">
    <property type="entry name" value="DNA-DIRECTED RNA POLYMERASE II SUBUNIT RPB3"/>
    <property type="match status" value="1"/>
</dbReference>
<dbReference type="Pfam" id="PF01000">
    <property type="entry name" value="RNA_pol_A_bac"/>
    <property type="match status" value="1"/>
</dbReference>
<dbReference type="Pfam" id="PF01193">
    <property type="entry name" value="RNA_pol_L"/>
    <property type="match status" value="1"/>
</dbReference>
<dbReference type="SMART" id="SM00662">
    <property type="entry name" value="RPOLD"/>
    <property type="match status" value="1"/>
</dbReference>
<dbReference type="SUPFAM" id="SSF56553">
    <property type="entry name" value="Insert subdomain of RNA polymerase alpha subunit"/>
    <property type="match status" value="1"/>
</dbReference>
<dbReference type="SUPFAM" id="SSF55257">
    <property type="entry name" value="RBP11-like subunits of RNA polymerase"/>
    <property type="match status" value="1"/>
</dbReference>
<dbReference type="PROSITE" id="PS00446">
    <property type="entry name" value="RNA_POL_D_30KD"/>
    <property type="match status" value="1"/>
</dbReference>
<evidence type="ECO:0000250" key="1">
    <source>
        <dbReference type="UniProtKB" id="P19387"/>
    </source>
</evidence>
<evidence type="ECO:0000256" key="2">
    <source>
        <dbReference type="SAM" id="MobiDB-lite"/>
    </source>
</evidence>
<evidence type="ECO:0000269" key="3">
    <source>
    </source>
</evidence>
<evidence type="ECO:0000269" key="4">
    <source>
    </source>
</evidence>
<evidence type="ECO:0000269" key="5">
    <source>
    </source>
</evidence>
<evidence type="ECO:0000305" key="6"/>
<evidence type="ECO:0007744" key="7">
    <source>
        <dbReference type="PDB" id="5FLM"/>
    </source>
</evidence>
<evidence type="ECO:0007829" key="8">
    <source>
        <dbReference type="PDB" id="5FLM"/>
    </source>
</evidence>
<protein>
    <recommendedName>
        <fullName evidence="6">DNA-directed RNA polymerase II subunit RPB3</fullName>
        <shortName>RNA polymerase II subunit 3</shortName>
        <shortName>RNA polymerase II subunit B3</shortName>
    </recommendedName>
    <alternativeName>
        <fullName>DNA-directed RNA polymerase II subunit C</fullName>
    </alternativeName>
</protein>
<gene>
    <name evidence="1" type="primary">POLR2C</name>
</gene>
<accession>Q3T0Q3</accession>
<accession>A7E3Q9</accession>
<reference key="1">
    <citation type="journal article" date="2005" name="BMC Genomics">
        <title>Characterization of 954 bovine full-CDS cDNA sequences.</title>
        <authorList>
            <person name="Harhay G.P."/>
            <person name="Sonstegard T.S."/>
            <person name="Keele J.W."/>
            <person name="Heaton M.P."/>
            <person name="Clawson M.L."/>
            <person name="Snelling W.M."/>
            <person name="Wiedmann R.T."/>
            <person name="Van Tassell C.P."/>
            <person name="Smith T.P.L."/>
        </authorList>
    </citation>
    <scope>NUCLEOTIDE SEQUENCE [LARGE SCALE MRNA]</scope>
</reference>
<reference key="2">
    <citation type="submission" date="2005-08" db="EMBL/GenBank/DDBJ databases">
        <authorList>
            <consortium name="NIH - Mammalian Gene Collection (MGC) project"/>
        </authorList>
    </citation>
    <scope>NUCLEOTIDE SEQUENCE [LARGE SCALE MRNA]</scope>
    <source>
        <strain>Hereford</strain>
    </source>
</reference>
<reference key="3">
    <citation type="journal article" date="2006" name="Proc. Natl. Acad. Sci. U.S.A.">
        <title>A Mediator-responsive form of metazoan RNA polymerase II.</title>
        <authorList>
            <person name="Hu X."/>
            <person name="Malik S."/>
            <person name="Negroiu C.C."/>
            <person name="Hubbard K."/>
            <person name="Velalar C.N."/>
            <person name="Hampton B."/>
            <person name="Grosu D."/>
            <person name="Catalano J."/>
            <person name="Roeder R.G."/>
            <person name="Gnatt A."/>
        </authorList>
    </citation>
    <scope>FUNCTION OF POL II</scope>
    <scope>SUBUNIT</scope>
    <scope>IDENTIFICATION IN THE POL II AND POL II(G) COMPLEXES</scope>
</reference>
<reference key="4">
    <citation type="journal article" date="2016" name="Nature">
        <title>Structure of transcribing mammalian RNA polymerase II.</title>
        <authorList>
            <person name="Bernecky C."/>
            <person name="Herzog F."/>
            <person name="Baumeister W."/>
            <person name="Plitzko J.M."/>
            <person name="Cramer P."/>
        </authorList>
    </citation>
    <scope>STRUCTURE BY ELECTRON MICROSCOPY (3.40 ANGSTROMS) IN COMPLEX WITH ZN(2+)</scope>
    <scope>FUNCTION OF POL II</scope>
    <scope>SUBUNIT</scope>
</reference>
<reference key="5">
    <citation type="journal article" date="2017" name="Nat. Struct. Mol. Biol.">
        <title>Structure of a transcribing RNA polymerase II-DSIF complex reveals a multidentate DNA-RNA clamp.</title>
        <authorList>
            <person name="Bernecky C."/>
            <person name="Plitzko J.M."/>
            <person name="Cramer P."/>
        </authorList>
    </citation>
    <scope>STRUCTURE BY ELECTRON MICROSCOPY (3.70 ANGSTROMS)</scope>
    <scope>SUBUNIT</scope>
</reference>
<proteinExistence type="evidence at protein level"/>
<comment type="function">
    <text evidence="3 4">Core component of RNA polymerase II (Pol II), a DNA-dependent RNA polymerase which synthesizes mRNA precursors and many functional non-coding RNAs using the four ribonucleoside triphosphates as substrates.</text>
</comment>
<comment type="subunit">
    <text evidence="1 3 4 5">Component of the RNA polymerase II (Pol II) core complex consisting of 12 subunits: a ten-subunit catalytic core composed of POLR2A/RPB1, POLR2B/RPB2, POLR2C/RPB3, POLR2I/RPB9, POLR2J/RPB11, POLR2E/RPABC1, POLR2F/RPABC2, POLR2H/RPABC3, POLR2K/RPABC4 and POLR2L/RPABC5 and a mobile stalk composed of two subunits POLR2D/RPB4 and POLR2G/RPB7, protruding from the core and functioning primarily in transcription initiation. Part of Pol II(G) complex, in which Pol II core associates with an additional subunit POLR2M; unlike conventional Pol II, Pol II(G) functions as a transcriptional repressor. Part of TBP-based Pol II pre-initiation complex (PIC), in which Pol II core assembles with general transcription factors and other specific initiation factors including GTF2E1, GTF2E2, GTF2F1, GTF2F2, TCEA1, ERCC2, ERCC3, GTF2H2, GTF2H3, GTF2H4, GTF2H5, GTF2A1, GTF2A2, GTF2B and TBP; this large multi-subunit PIC complex mediates DNA unwinding and targets Pol II core to the transcription start site where the first phosphodiester bond forms. Interacts with PTPN6; this interaction promotes the recruitment of RNA pol II to the PCK1 promoter.</text>
</comment>
<comment type="subcellular location">
    <subcellularLocation>
        <location evidence="1">Nucleus</location>
    </subcellularLocation>
</comment>
<comment type="similarity">
    <text evidence="6">Belongs to the archaeal Rpo3/eukaryotic RPB3 RNA polymerase subunit family.</text>
</comment>